<comment type="subcellular location">
    <subcellularLocation>
        <location evidence="1">Secreted</location>
    </subcellularLocation>
</comment>
<comment type="tissue specificity">
    <text>Expressed by the venom gland.</text>
</comment>
<comment type="domain">
    <text evidence="1">The presence of a 'disulfide through disulfide knot' structurally defines this protein as a knottin.</text>
</comment>
<comment type="similarity">
    <text evidence="3">Belongs to the neurotoxin 19 (CSTX) family. 04 (U1-Lctx) subfamily.</text>
</comment>
<protein>
    <recommendedName>
        <fullName>U1-lycotoxin-Ls1b</fullName>
    </recommendedName>
    <alternativeName>
        <fullName>Toxin-like structure LSTX-A2</fullName>
    </alternativeName>
</protein>
<name>TX102_LYCSI</name>
<keyword id="KW-1015">Disulfide bond</keyword>
<keyword id="KW-0960">Knottin</keyword>
<keyword id="KW-0964">Secreted</keyword>
<keyword id="KW-0732">Signal</keyword>
<keyword id="KW-0800">Toxin</keyword>
<sequence>MKVLVVVALLVTLISYSSSEGIDDLEADELLSLMANEQTRKECIPKHHECTSNKHGCCRGNFFKYKCQCTTVVTQDGEQTERCFCGTPPHHKAAELVVGFGKKIFG</sequence>
<proteinExistence type="evidence at transcript level"/>
<accession>B6DCJ1</accession>
<feature type="signal peptide" evidence="2">
    <location>
        <begin position="1"/>
        <end position="19"/>
    </location>
</feature>
<feature type="propeptide" id="PRO_0000401505" evidence="1">
    <location>
        <begin position="20"/>
        <end position="40"/>
    </location>
</feature>
<feature type="chain" id="PRO_0000401506" description="U1-lycotoxin-Ls1b">
    <location>
        <begin position="41"/>
        <end position="106"/>
    </location>
</feature>
<feature type="disulfide bond" evidence="1">
    <location>
        <begin position="43"/>
        <end position="58"/>
    </location>
</feature>
<feature type="disulfide bond" evidence="1">
    <location>
        <begin position="50"/>
        <end position="67"/>
    </location>
</feature>
<feature type="disulfide bond" evidence="1">
    <location>
        <begin position="57"/>
        <end position="85"/>
    </location>
</feature>
<feature type="disulfide bond" evidence="1">
    <location>
        <begin position="69"/>
        <end position="83"/>
    </location>
</feature>
<reference key="1">
    <citation type="journal article" date="2010" name="Zoology">
        <title>Transcriptome analysis of the venom glands of the Chinese wolf spider Lycosa singoriensis.</title>
        <authorList>
            <person name="Zhang Y."/>
            <person name="Chen J."/>
            <person name="Tang X."/>
            <person name="Wang F."/>
            <person name="Jiang L."/>
            <person name="Xiong X."/>
            <person name="Wang M."/>
            <person name="Rong M."/>
            <person name="Liu Z."/>
            <person name="Liang S."/>
        </authorList>
    </citation>
    <scope>NUCLEOTIDE SEQUENCE [LARGE SCALE MRNA]</scope>
    <source>
        <tissue>Venom gland</tissue>
    </source>
</reference>
<dbReference type="EMBL" id="EU925925">
    <property type="protein sequence ID" value="ACI41257.1"/>
    <property type="molecule type" value="mRNA"/>
</dbReference>
<dbReference type="EMBL" id="FM863929">
    <property type="protein sequence ID" value="CAS03530.1"/>
    <property type="molecule type" value="mRNA"/>
</dbReference>
<dbReference type="SMR" id="B6DCJ1"/>
<dbReference type="ArachnoServer" id="AS000884">
    <property type="toxin name" value="U1-lycotoxin-Ls1b"/>
</dbReference>
<dbReference type="GO" id="GO:0005576">
    <property type="term" value="C:extracellular region"/>
    <property type="evidence" value="ECO:0007669"/>
    <property type="project" value="UniProtKB-SubCell"/>
</dbReference>
<dbReference type="GO" id="GO:0090729">
    <property type="term" value="F:toxin activity"/>
    <property type="evidence" value="ECO:0007669"/>
    <property type="project" value="UniProtKB-KW"/>
</dbReference>
<dbReference type="InterPro" id="IPR019553">
    <property type="entry name" value="Spider_toxin_CSTX_knottin"/>
</dbReference>
<dbReference type="InterPro" id="IPR011142">
    <property type="entry name" value="Spider_toxin_CSTX_Knottin_CS"/>
</dbReference>
<dbReference type="Pfam" id="PF10530">
    <property type="entry name" value="Toxin_35"/>
    <property type="match status" value="1"/>
</dbReference>
<dbReference type="PROSITE" id="PS60029">
    <property type="entry name" value="SPIDER_CSTX"/>
    <property type="match status" value="1"/>
</dbReference>
<evidence type="ECO:0000250" key="1"/>
<evidence type="ECO:0000255" key="2"/>
<evidence type="ECO:0000305" key="3"/>
<organism>
    <name type="scientific">Lycosa singoriensis</name>
    <name type="common">Wolf spider</name>
    <name type="synonym">Aranea singoriensis</name>
    <dbReference type="NCBI Taxonomy" id="434756"/>
    <lineage>
        <taxon>Eukaryota</taxon>
        <taxon>Metazoa</taxon>
        <taxon>Ecdysozoa</taxon>
        <taxon>Arthropoda</taxon>
        <taxon>Chelicerata</taxon>
        <taxon>Arachnida</taxon>
        <taxon>Araneae</taxon>
        <taxon>Araneomorphae</taxon>
        <taxon>Entelegynae</taxon>
        <taxon>Lycosoidea</taxon>
        <taxon>Lycosidae</taxon>
        <taxon>Lycosa</taxon>
    </lineage>
</organism>